<dbReference type="EMBL" id="L07580">
    <property type="protein sequence ID" value="AAA32200.1"/>
    <property type="molecule type" value="Genomic_DNA"/>
</dbReference>
<dbReference type="SMR" id="Q03182"/>
<dbReference type="GO" id="GO:0003677">
    <property type="term" value="F:DNA binding"/>
    <property type="evidence" value="ECO:0007669"/>
    <property type="project" value="UniProtKB-KW"/>
</dbReference>
<dbReference type="InterPro" id="IPR006523">
    <property type="entry name" value="RinA"/>
</dbReference>
<dbReference type="NCBIfam" id="TIGR01636">
    <property type="entry name" value="phage_rinA"/>
    <property type="match status" value="1"/>
</dbReference>
<protein>
    <recommendedName>
        <fullName>Transcriptional activator rinA</fullName>
    </recommendedName>
</protein>
<organismHost>
    <name type="scientific">Staphylococcus aureus</name>
    <dbReference type="NCBI Taxonomy" id="1280"/>
</organismHost>
<name>RINA_BPPHA</name>
<sequence length="140" mass="16460">MTKKKYGLKLSTVRKLEDELCDYPNYHKQLEDLRSEIMTPWIPTDTNIGGEFVPSNTSKTEMAVTNYLCSIRRGKILEFKSAIERIINSSSRKEREFIQEYYFNKKELVKVCVDIHISDRTAHRIKRKIISRLAEELGED</sequence>
<keyword id="KW-0010">Activator</keyword>
<keyword id="KW-0238">DNA-binding</keyword>
<keyword id="KW-0804">Transcription</keyword>
<keyword id="KW-0805">Transcription regulation</keyword>
<organism>
    <name type="scientific">Staphylococcus phage phi11</name>
    <name type="common">Bacteriophage phi-11</name>
    <dbReference type="NCBI Taxonomy" id="2681609"/>
    <lineage>
        <taxon>Viruses</taxon>
        <taxon>Duplodnaviria</taxon>
        <taxon>Heunggongvirae</taxon>
        <taxon>Uroviricota</taxon>
        <taxon>Caudoviricetes</taxon>
        <taxon>Azeredovirinae</taxon>
        <taxon>Dubowvirus</taxon>
        <taxon>Dubowvirus dv11</taxon>
    </lineage>
</organism>
<comment type="function">
    <text>Activates int gene expression, probably by direct DNA-binding. Int activation requires both rinA and rinB.</text>
</comment>
<proteinExistence type="predicted"/>
<gene>
    <name type="primary">RINA</name>
</gene>
<feature type="chain" id="PRO_0000097341" description="Transcriptional activator rinA">
    <location>
        <begin position="1"/>
        <end position="140"/>
    </location>
</feature>
<accession>Q03182</accession>
<reference key="1">
    <citation type="journal article" date="1993" name="J. Bacteriol.">
        <title>Cloning, sequencing, and genetic characterization of regulatory genes, rinA and rinB, required for the activation of staphylococcal phage phi 11 int expression.</title>
        <authorList>
            <person name="Ye Z.-H."/>
            <person name="Lee C.Y."/>
        </authorList>
    </citation>
    <scope>NUCLEOTIDE SEQUENCE [GENOMIC DNA]</scope>
</reference>